<proteinExistence type="inferred from homology"/>
<organism>
    <name type="scientific">Latilactobacillus sakei subsp. sakei (strain 23K)</name>
    <name type="common">Lactobacillus sakei subsp. sakei</name>
    <dbReference type="NCBI Taxonomy" id="314315"/>
    <lineage>
        <taxon>Bacteria</taxon>
        <taxon>Bacillati</taxon>
        <taxon>Bacillota</taxon>
        <taxon>Bacilli</taxon>
        <taxon>Lactobacillales</taxon>
        <taxon>Lactobacillaceae</taxon>
        <taxon>Latilactobacillus</taxon>
    </lineage>
</organism>
<sequence length="102" mass="11696">MAKQKIRIRLKAFEHRILDQSADKIVETAKRTGASISGPIPLPTERTLYTVLRSPHKHKDSREQFEMRTHKRLIDIVNPTPKTVDSLMKLDLPSGVDIEIKL</sequence>
<gene>
    <name evidence="1" type="primary">rpsJ</name>
    <name type="ordered locus">LCA_1765</name>
</gene>
<reference key="1">
    <citation type="journal article" date="2005" name="Nat. Biotechnol.">
        <title>The complete genome sequence of the meat-borne lactic acid bacterium Lactobacillus sakei 23K.</title>
        <authorList>
            <person name="Chaillou S."/>
            <person name="Champomier-Verges M.-C."/>
            <person name="Cornet M."/>
            <person name="Crutz-Le Coq A.-M."/>
            <person name="Dudez A.-M."/>
            <person name="Martin V."/>
            <person name="Beaufils S."/>
            <person name="Darbon-Rongere E."/>
            <person name="Bossy R."/>
            <person name="Loux V."/>
            <person name="Zagorec M."/>
        </authorList>
    </citation>
    <scope>NUCLEOTIDE SEQUENCE [LARGE SCALE GENOMIC DNA]</scope>
    <source>
        <strain>23K</strain>
    </source>
</reference>
<comment type="function">
    <text evidence="1">Involved in the binding of tRNA to the ribosomes.</text>
</comment>
<comment type="subunit">
    <text evidence="1">Part of the 30S ribosomal subunit.</text>
</comment>
<comment type="similarity">
    <text evidence="1">Belongs to the universal ribosomal protein uS10 family.</text>
</comment>
<keyword id="KW-1185">Reference proteome</keyword>
<keyword id="KW-0687">Ribonucleoprotein</keyword>
<keyword id="KW-0689">Ribosomal protein</keyword>
<accession>Q38UR1</accession>
<feature type="chain" id="PRO_0000237054" description="Small ribosomal subunit protein uS10">
    <location>
        <begin position="1"/>
        <end position="102"/>
    </location>
</feature>
<protein>
    <recommendedName>
        <fullName evidence="1">Small ribosomal subunit protein uS10</fullName>
    </recommendedName>
    <alternativeName>
        <fullName evidence="2">30S ribosomal protein S10</fullName>
    </alternativeName>
</protein>
<dbReference type="EMBL" id="CR936503">
    <property type="protein sequence ID" value="CAI56073.1"/>
    <property type="molecule type" value="Genomic_DNA"/>
</dbReference>
<dbReference type="RefSeq" id="WP_011375450.1">
    <property type="nucleotide sequence ID" value="NC_007576.1"/>
</dbReference>
<dbReference type="SMR" id="Q38UR1"/>
<dbReference type="STRING" id="314315.LCA_1765"/>
<dbReference type="GeneID" id="57132682"/>
<dbReference type="KEGG" id="lsa:LCA_1765"/>
<dbReference type="eggNOG" id="COG0051">
    <property type="taxonomic scope" value="Bacteria"/>
</dbReference>
<dbReference type="HOGENOM" id="CLU_122625_1_3_9"/>
<dbReference type="OrthoDB" id="9804464at2"/>
<dbReference type="Proteomes" id="UP000002707">
    <property type="component" value="Chromosome"/>
</dbReference>
<dbReference type="GO" id="GO:1990904">
    <property type="term" value="C:ribonucleoprotein complex"/>
    <property type="evidence" value="ECO:0007669"/>
    <property type="project" value="UniProtKB-KW"/>
</dbReference>
<dbReference type="GO" id="GO:0005840">
    <property type="term" value="C:ribosome"/>
    <property type="evidence" value="ECO:0007669"/>
    <property type="project" value="UniProtKB-KW"/>
</dbReference>
<dbReference type="GO" id="GO:0003735">
    <property type="term" value="F:structural constituent of ribosome"/>
    <property type="evidence" value="ECO:0007669"/>
    <property type="project" value="InterPro"/>
</dbReference>
<dbReference type="GO" id="GO:0000049">
    <property type="term" value="F:tRNA binding"/>
    <property type="evidence" value="ECO:0007669"/>
    <property type="project" value="UniProtKB-UniRule"/>
</dbReference>
<dbReference type="GO" id="GO:0006412">
    <property type="term" value="P:translation"/>
    <property type="evidence" value="ECO:0007669"/>
    <property type="project" value="UniProtKB-UniRule"/>
</dbReference>
<dbReference type="FunFam" id="3.30.70.600:FF:000001">
    <property type="entry name" value="30S ribosomal protein S10"/>
    <property type="match status" value="1"/>
</dbReference>
<dbReference type="Gene3D" id="3.30.70.600">
    <property type="entry name" value="Ribosomal protein S10 domain"/>
    <property type="match status" value="1"/>
</dbReference>
<dbReference type="HAMAP" id="MF_00508">
    <property type="entry name" value="Ribosomal_uS10"/>
    <property type="match status" value="1"/>
</dbReference>
<dbReference type="InterPro" id="IPR001848">
    <property type="entry name" value="Ribosomal_uS10"/>
</dbReference>
<dbReference type="InterPro" id="IPR018268">
    <property type="entry name" value="Ribosomal_uS10_CS"/>
</dbReference>
<dbReference type="InterPro" id="IPR027486">
    <property type="entry name" value="Ribosomal_uS10_dom"/>
</dbReference>
<dbReference type="InterPro" id="IPR036838">
    <property type="entry name" value="Ribosomal_uS10_dom_sf"/>
</dbReference>
<dbReference type="NCBIfam" id="NF001861">
    <property type="entry name" value="PRK00596.1"/>
    <property type="match status" value="1"/>
</dbReference>
<dbReference type="NCBIfam" id="TIGR01049">
    <property type="entry name" value="rpsJ_bact"/>
    <property type="match status" value="1"/>
</dbReference>
<dbReference type="PANTHER" id="PTHR11700">
    <property type="entry name" value="30S RIBOSOMAL PROTEIN S10 FAMILY MEMBER"/>
    <property type="match status" value="1"/>
</dbReference>
<dbReference type="Pfam" id="PF00338">
    <property type="entry name" value="Ribosomal_S10"/>
    <property type="match status" value="1"/>
</dbReference>
<dbReference type="PRINTS" id="PR00971">
    <property type="entry name" value="RIBOSOMALS10"/>
</dbReference>
<dbReference type="SMART" id="SM01403">
    <property type="entry name" value="Ribosomal_S10"/>
    <property type="match status" value="1"/>
</dbReference>
<dbReference type="SUPFAM" id="SSF54999">
    <property type="entry name" value="Ribosomal protein S10"/>
    <property type="match status" value="1"/>
</dbReference>
<dbReference type="PROSITE" id="PS00361">
    <property type="entry name" value="RIBOSOMAL_S10"/>
    <property type="match status" value="1"/>
</dbReference>
<name>RS10_LATSS</name>
<evidence type="ECO:0000255" key="1">
    <source>
        <dbReference type="HAMAP-Rule" id="MF_00508"/>
    </source>
</evidence>
<evidence type="ECO:0000305" key="2"/>